<gene>
    <name type="primary">FOXL2</name>
</gene>
<protein>
    <recommendedName>
        <fullName>Forkhead box protein L2</fullName>
    </recommendedName>
</protein>
<proteinExistence type="inferred from homology"/>
<keyword id="KW-0221">Differentiation</keyword>
<keyword id="KW-0238">DNA-binding</keyword>
<keyword id="KW-1017">Isopeptide bond</keyword>
<keyword id="KW-0539">Nucleus</keyword>
<keyword id="KW-0597">Phosphoprotein</keyword>
<keyword id="KW-1185">Reference proteome</keyword>
<keyword id="KW-0804">Transcription</keyword>
<keyword id="KW-0805">Transcription regulation</keyword>
<keyword id="KW-0832">Ubl conjugation</keyword>
<feature type="chain" id="PRO_0000246180" description="Forkhead box protein L2">
    <location>
        <begin position="1"/>
        <end position="384"/>
    </location>
</feature>
<feature type="DNA-binding region" description="Fork-head" evidence="3">
    <location>
        <begin position="56"/>
        <end position="150"/>
    </location>
</feature>
<feature type="region of interest" description="Disordered" evidence="4">
    <location>
        <begin position="1"/>
        <end position="54"/>
    </location>
</feature>
<feature type="region of interest" description="Disordered" evidence="4">
    <location>
        <begin position="277"/>
        <end position="350"/>
    </location>
</feature>
<feature type="compositionally biased region" description="Gly residues" evidence="4">
    <location>
        <begin position="35"/>
        <end position="46"/>
    </location>
</feature>
<feature type="compositionally biased region" description="Pro residues" evidence="4">
    <location>
        <begin position="283"/>
        <end position="297"/>
    </location>
</feature>
<feature type="compositionally biased region" description="Basic residues" evidence="4">
    <location>
        <begin position="298"/>
        <end position="308"/>
    </location>
</feature>
<feature type="compositionally biased region" description="Pro residues" evidence="4">
    <location>
        <begin position="312"/>
        <end position="329"/>
    </location>
</feature>
<feature type="modified residue" description="Phosphoserine" evidence="2">
    <location>
        <position position="33"/>
    </location>
</feature>
<feature type="cross-link" description="Glycyl lysine isopeptide (Lys-Gly) (interchain with G-Cter in SUMO)" evidence="1">
    <location>
        <position position="25"/>
    </location>
</feature>
<evidence type="ECO:0000250" key="1"/>
<evidence type="ECO:0000250" key="2">
    <source>
        <dbReference type="UniProtKB" id="P58012"/>
    </source>
</evidence>
<evidence type="ECO:0000255" key="3">
    <source>
        <dbReference type="PROSITE-ProRule" id="PRU00089"/>
    </source>
</evidence>
<evidence type="ECO:0000256" key="4">
    <source>
        <dbReference type="SAM" id="MobiDB-lite"/>
    </source>
</evidence>
<sequence length="384" mass="39385">MMASYPEPEEAAGALLAPESGRAAKEPEAPPPSPGKGGGGGGGGGSAAEKPDPAQKPPYSYVALIAMAIRESAEKRLTLSGIYQYIIAKFPFYEKNKKGWQNSIRHNLSLNECFIKVPREGGGERKGNYWTLDPACEDMFEKGNYRRRRRMKRPFRPPPAHFQPGKGLFGAAGAAGGCGVAGAGADGYGYLAPPKYLQSGFLNNSWPLPQPPSPMPYASCQMAAAAAAAAAAAAAAGPGSPGAAAVVKGLAGPAASYGPYSRVQSMALPPGVVNSYNGLGGPPAAPPPPPPPPPPPHPHPHPHAHHLHAAAAPPPAPPHHGAAAPPPGQLSPASPATAAPPAPAPTSAPGLQFACARQPELAMMHCSYWDHDSKTGALHSRLDL</sequence>
<dbReference type="EMBL" id="AY340972">
    <property type="protein sequence ID" value="AAQ91846.1"/>
    <property type="molecule type" value="Genomic_DNA"/>
</dbReference>
<dbReference type="RefSeq" id="NP_001164586.1">
    <property type="nucleotide sequence ID" value="NM_001171115.1"/>
</dbReference>
<dbReference type="SMR" id="Q6VFT5"/>
<dbReference type="FunCoup" id="Q6VFT5">
    <property type="interactions" value="145"/>
</dbReference>
<dbReference type="GeneID" id="100328926"/>
<dbReference type="KEGG" id="ocu:100328926"/>
<dbReference type="CTD" id="668"/>
<dbReference type="InParanoid" id="Q6VFT5"/>
<dbReference type="OrthoDB" id="6230630at2759"/>
<dbReference type="Proteomes" id="UP000001811">
    <property type="component" value="Unplaced"/>
</dbReference>
<dbReference type="GO" id="GO:0005634">
    <property type="term" value="C:nucleus"/>
    <property type="evidence" value="ECO:0000250"/>
    <property type="project" value="UniProtKB"/>
</dbReference>
<dbReference type="GO" id="GO:0043028">
    <property type="term" value="F:cysteine-type endopeptidase regulator activity involved in apoptotic process"/>
    <property type="evidence" value="ECO:0000250"/>
    <property type="project" value="UniProtKB"/>
</dbReference>
<dbReference type="GO" id="GO:0003677">
    <property type="term" value="F:DNA binding"/>
    <property type="evidence" value="ECO:0000250"/>
    <property type="project" value="UniProtKB"/>
</dbReference>
<dbReference type="GO" id="GO:0003700">
    <property type="term" value="F:DNA-binding transcription factor activity"/>
    <property type="evidence" value="ECO:0000250"/>
    <property type="project" value="UniProtKB"/>
</dbReference>
<dbReference type="GO" id="GO:0000981">
    <property type="term" value="F:DNA-binding transcription factor activity, RNA polymerase II-specific"/>
    <property type="evidence" value="ECO:0007669"/>
    <property type="project" value="TreeGrafter"/>
</dbReference>
<dbReference type="GO" id="GO:0000978">
    <property type="term" value="F:RNA polymerase II cis-regulatory region sequence-specific DNA binding"/>
    <property type="evidence" value="ECO:0007669"/>
    <property type="project" value="TreeGrafter"/>
</dbReference>
<dbReference type="GO" id="GO:0009653">
    <property type="term" value="P:anatomical structure morphogenesis"/>
    <property type="evidence" value="ECO:0007669"/>
    <property type="project" value="TreeGrafter"/>
</dbReference>
<dbReference type="GO" id="GO:0006309">
    <property type="term" value="P:apoptotic DNA fragmentation"/>
    <property type="evidence" value="ECO:0000250"/>
    <property type="project" value="UniProtKB"/>
</dbReference>
<dbReference type="GO" id="GO:0030154">
    <property type="term" value="P:cell differentiation"/>
    <property type="evidence" value="ECO:0007669"/>
    <property type="project" value="UniProtKB-KW"/>
</dbReference>
<dbReference type="GO" id="GO:0002074">
    <property type="term" value="P:extraocular skeletal muscle development"/>
    <property type="evidence" value="ECO:0000250"/>
    <property type="project" value="UniProtKB"/>
</dbReference>
<dbReference type="GO" id="GO:0001541">
    <property type="term" value="P:ovarian follicle development"/>
    <property type="evidence" value="ECO:0000250"/>
    <property type="project" value="UniProtKB"/>
</dbReference>
<dbReference type="GO" id="GO:0043065">
    <property type="term" value="P:positive regulation of apoptotic process"/>
    <property type="evidence" value="ECO:0000250"/>
    <property type="project" value="UniProtKB"/>
</dbReference>
<dbReference type="GO" id="GO:0045893">
    <property type="term" value="P:positive regulation of DNA-templated transcription"/>
    <property type="evidence" value="ECO:0000250"/>
    <property type="project" value="UniProtKB"/>
</dbReference>
<dbReference type="CDD" id="cd20028">
    <property type="entry name" value="FH_FOXL2"/>
    <property type="match status" value="1"/>
</dbReference>
<dbReference type="FunFam" id="1.10.10.10:FF:000016">
    <property type="entry name" value="Forkhead box protein I1"/>
    <property type="match status" value="1"/>
</dbReference>
<dbReference type="Gene3D" id="1.10.10.10">
    <property type="entry name" value="Winged helix-like DNA-binding domain superfamily/Winged helix DNA-binding domain"/>
    <property type="match status" value="1"/>
</dbReference>
<dbReference type="InterPro" id="IPR047515">
    <property type="entry name" value="FH_FOXL2"/>
</dbReference>
<dbReference type="InterPro" id="IPR001766">
    <property type="entry name" value="Fork_head_dom"/>
</dbReference>
<dbReference type="InterPro" id="IPR050211">
    <property type="entry name" value="FOX_domain-containing"/>
</dbReference>
<dbReference type="InterPro" id="IPR018122">
    <property type="entry name" value="TF_fork_head_CS_1"/>
</dbReference>
<dbReference type="InterPro" id="IPR030456">
    <property type="entry name" value="TF_fork_head_CS_2"/>
</dbReference>
<dbReference type="InterPro" id="IPR036388">
    <property type="entry name" value="WH-like_DNA-bd_sf"/>
</dbReference>
<dbReference type="InterPro" id="IPR036390">
    <property type="entry name" value="WH_DNA-bd_sf"/>
</dbReference>
<dbReference type="PANTHER" id="PTHR11829">
    <property type="entry name" value="FORKHEAD BOX PROTEIN"/>
    <property type="match status" value="1"/>
</dbReference>
<dbReference type="PANTHER" id="PTHR11829:SF411">
    <property type="entry name" value="FORKHEAD BOX PROTEIN L2"/>
    <property type="match status" value="1"/>
</dbReference>
<dbReference type="Pfam" id="PF00250">
    <property type="entry name" value="Forkhead"/>
    <property type="match status" value="1"/>
</dbReference>
<dbReference type="PRINTS" id="PR00053">
    <property type="entry name" value="FORKHEAD"/>
</dbReference>
<dbReference type="SMART" id="SM00339">
    <property type="entry name" value="FH"/>
    <property type="match status" value="1"/>
</dbReference>
<dbReference type="SUPFAM" id="SSF46785">
    <property type="entry name" value="Winged helix' DNA-binding domain"/>
    <property type="match status" value="1"/>
</dbReference>
<dbReference type="PROSITE" id="PS00657">
    <property type="entry name" value="FORK_HEAD_1"/>
    <property type="match status" value="1"/>
</dbReference>
<dbReference type="PROSITE" id="PS00658">
    <property type="entry name" value="FORK_HEAD_2"/>
    <property type="match status" value="1"/>
</dbReference>
<dbReference type="PROSITE" id="PS50039">
    <property type="entry name" value="FORK_HEAD_3"/>
    <property type="match status" value="1"/>
</dbReference>
<comment type="function">
    <text evidence="1">Transcriptional regulator. Critical factor essential for ovary differentiation and maintenance, and repression of the genetic program for somatic testis determination (By similarity). Prevents trans-differentiation of ovary to testis through transcriptional repression of the Sertoli cell-promoting gene SOX9 (By similarity). Has apoptotic activity in ovarian cells (By similarity). Suppresses ESR1-mediated transcription of PTGS2/COX2 stimulated by tamoxifen (By similarity). Activates SIRT1 transcription under cellular stress conditions (By similarity). Activates transcription of OSR2 (By similarity). Is a regulator of CYP19 expression (By similarity). Is a transcriptional repressor of STAR (By similarity). Participates in SMAD3-dependent transcription of FST via the intronic SMAD-binding element (By similarity).</text>
</comment>
<comment type="subunit">
    <text evidence="1">Interacts with ESR1. Interacts with UBE2I/UBC9. Interacts with SMAD3. Interacts with DDX20.</text>
</comment>
<comment type="subcellular location">
    <subcellularLocation>
        <location evidence="3">Nucleus</location>
    </subcellularLocation>
</comment>
<comment type="PTM">
    <text evidence="1">Sumoylated with SUMO1; sumoylation is required for transcriptional repression activity.</text>
</comment>
<accession>Q6VFT5</accession>
<organism>
    <name type="scientific">Oryctolagus cuniculus</name>
    <name type="common">Rabbit</name>
    <dbReference type="NCBI Taxonomy" id="9986"/>
    <lineage>
        <taxon>Eukaryota</taxon>
        <taxon>Metazoa</taxon>
        <taxon>Chordata</taxon>
        <taxon>Craniata</taxon>
        <taxon>Vertebrata</taxon>
        <taxon>Euteleostomi</taxon>
        <taxon>Mammalia</taxon>
        <taxon>Eutheria</taxon>
        <taxon>Euarchontoglires</taxon>
        <taxon>Glires</taxon>
        <taxon>Lagomorpha</taxon>
        <taxon>Leporidae</taxon>
        <taxon>Oryctolagus</taxon>
    </lineage>
</organism>
<reference key="1">
    <citation type="journal article" date="2003" name="Cytogenet. Genome Res.">
        <title>Structure, evolution and expression of the FOXL2 transcription unit.</title>
        <authorList>
            <person name="Cocquet J."/>
            <person name="De Baere E."/>
            <person name="Gareil M."/>
            <person name="Pannetier M."/>
            <person name="Xia X."/>
            <person name="Fellous M."/>
            <person name="Veitia R.A."/>
        </authorList>
    </citation>
    <scope>NUCLEOTIDE SEQUENCE [GENOMIC DNA]</scope>
</reference>
<name>FOXL2_RABIT</name>